<organism>
    <name type="scientific">Methanosarcina barkeri (strain Fusaro / DSM 804)</name>
    <dbReference type="NCBI Taxonomy" id="269797"/>
    <lineage>
        <taxon>Archaea</taxon>
        <taxon>Methanobacteriati</taxon>
        <taxon>Methanobacteriota</taxon>
        <taxon>Stenosarchaea group</taxon>
        <taxon>Methanomicrobia</taxon>
        <taxon>Methanosarcinales</taxon>
        <taxon>Methanosarcinaceae</taxon>
        <taxon>Methanosarcina</taxon>
    </lineage>
</organism>
<proteinExistence type="inferred from homology"/>
<dbReference type="EC" id="1.2.1.41" evidence="1"/>
<dbReference type="EMBL" id="CP000099">
    <property type="protein sequence ID" value="AAZ69464.1"/>
    <property type="molecule type" value="Genomic_DNA"/>
</dbReference>
<dbReference type="SMR" id="Q46F78"/>
<dbReference type="STRING" id="269797.Mbar_A0482"/>
<dbReference type="PaxDb" id="269797-Mbar_A0482"/>
<dbReference type="KEGG" id="mba:Mbar_A0482"/>
<dbReference type="eggNOG" id="arCOG01253">
    <property type="taxonomic scope" value="Archaea"/>
</dbReference>
<dbReference type="HOGENOM" id="CLU_030231_0_1_2"/>
<dbReference type="OrthoDB" id="53031at2157"/>
<dbReference type="UniPathway" id="UPA00098">
    <property type="reaction ID" value="UER00360"/>
</dbReference>
<dbReference type="GO" id="GO:0005737">
    <property type="term" value="C:cytoplasm"/>
    <property type="evidence" value="ECO:0007669"/>
    <property type="project" value="UniProtKB-SubCell"/>
</dbReference>
<dbReference type="GO" id="GO:0004350">
    <property type="term" value="F:glutamate-5-semialdehyde dehydrogenase activity"/>
    <property type="evidence" value="ECO:0007669"/>
    <property type="project" value="UniProtKB-UniRule"/>
</dbReference>
<dbReference type="GO" id="GO:0050661">
    <property type="term" value="F:NADP binding"/>
    <property type="evidence" value="ECO:0007669"/>
    <property type="project" value="InterPro"/>
</dbReference>
<dbReference type="GO" id="GO:0055129">
    <property type="term" value="P:L-proline biosynthetic process"/>
    <property type="evidence" value="ECO:0007669"/>
    <property type="project" value="UniProtKB-UniRule"/>
</dbReference>
<dbReference type="CDD" id="cd07079">
    <property type="entry name" value="ALDH_F18-19_ProA-GPR"/>
    <property type="match status" value="1"/>
</dbReference>
<dbReference type="FunFam" id="3.40.309.10:FF:000006">
    <property type="entry name" value="Gamma-glutamyl phosphate reductase"/>
    <property type="match status" value="1"/>
</dbReference>
<dbReference type="Gene3D" id="3.40.605.10">
    <property type="entry name" value="Aldehyde Dehydrogenase, Chain A, domain 1"/>
    <property type="match status" value="1"/>
</dbReference>
<dbReference type="Gene3D" id="3.40.309.10">
    <property type="entry name" value="Aldehyde Dehydrogenase, Chain A, domain 2"/>
    <property type="match status" value="1"/>
</dbReference>
<dbReference type="HAMAP" id="MF_00412">
    <property type="entry name" value="ProA"/>
    <property type="match status" value="1"/>
</dbReference>
<dbReference type="InterPro" id="IPR016161">
    <property type="entry name" value="Ald_DH/histidinol_DH"/>
</dbReference>
<dbReference type="InterPro" id="IPR016163">
    <property type="entry name" value="Ald_DH_C"/>
</dbReference>
<dbReference type="InterPro" id="IPR016162">
    <property type="entry name" value="Ald_DH_N"/>
</dbReference>
<dbReference type="InterPro" id="IPR015590">
    <property type="entry name" value="Aldehyde_DH_dom"/>
</dbReference>
<dbReference type="InterPro" id="IPR020593">
    <property type="entry name" value="G-glutamylP_reductase_CS"/>
</dbReference>
<dbReference type="InterPro" id="IPR012134">
    <property type="entry name" value="Glu-5-SA_DH"/>
</dbReference>
<dbReference type="InterPro" id="IPR000965">
    <property type="entry name" value="GPR_dom"/>
</dbReference>
<dbReference type="NCBIfam" id="NF001221">
    <property type="entry name" value="PRK00197.1"/>
    <property type="match status" value="1"/>
</dbReference>
<dbReference type="NCBIfam" id="TIGR00407">
    <property type="entry name" value="proA"/>
    <property type="match status" value="1"/>
</dbReference>
<dbReference type="PANTHER" id="PTHR11063:SF8">
    <property type="entry name" value="DELTA-1-PYRROLINE-5-CARBOXYLATE SYNTHASE"/>
    <property type="match status" value="1"/>
</dbReference>
<dbReference type="PANTHER" id="PTHR11063">
    <property type="entry name" value="GLUTAMATE SEMIALDEHYDE DEHYDROGENASE"/>
    <property type="match status" value="1"/>
</dbReference>
<dbReference type="Pfam" id="PF00171">
    <property type="entry name" value="Aldedh"/>
    <property type="match status" value="1"/>
</dbReference>
<dbReference type="PIRSF" id="PIRSF000151">
    <property type="entry name" value="GPR"/>
    <property type="match status" value="1"/>
</dbReference>
<dbReference type="SUPFAM" id="SSF53720">
    <property type="entry name" value="ALDH-like"/>
    <property type="match status" value="1"/>
</dbReference>
<dbReference type="PROSITE" id="PS01223">
    <property type="entry name" value="PROA"/>
    <property type="match status" value="1"/>
</dbReference>
<gene>
    <name evidence="1" type="primary">proA</name>
    <name type="ordered locus">Mbar_A0482</name>
</gene>
<sequence>MAEDIKSKVIQAKKASIELSSVSTEVKNLALEAMAQALDKERKAILDANAKDLEAAAELKKKGKLTQALVDRLKVSDSKIDGMIAGIRDVIKLKDPVGDTLSTLELDKDLILYQVSCPIGLIGVIFESRPDVVPQVMSLCLKSGNATIFKGGSEARESNRTIFQILVKAIESTDGMPAGAFQLMETREEIMDLLSLDAYVDLLIPRGSNEFVKFIQENTKISVLGHTSGICHIYVDEYVDLDTAWKVCFDAKVQYPAVCNAIETLLINRKIADTFLPKMAEMYLSAGVELRCDEDSYALLEKRGLSPLSRATEEDWSLEYNDLILSIKLVDTIKEAIDHINTFGSHHTDGIITEDASRRKAFTALVDSSSVMVNASTRFADGYRYGKGAEVGISTNKIHSRGPVGMEGLLIYKYILLGKGQVVADYAGENAKPYTHRKLDLKFEDVN</sequence>
<keyword id="KW-0028">Amino-acid biosynthesis</keyword>
<keyword id="KW-0963">Cytoplasm</keyword>
<keyword id="KW-0521">NADP</keyword>
<keyword id="KW-0560">Oxidoreductase</keyword>
<keyword id="KW-0641">Proline biosynthesis</keyword>
<comment type="function">
    <text evidence="1">Catalyzes the NADPH-dependent reduction of L-glutamate 5-phosphate into L-glutamate 5-semialdehyde and phosphate. The product spontaneously undergoes cyclization to form 1-pyrroline-5-carboxylate.</text>
</comment>
<comment type="catalytic activity">
    <reaction evidence="1">
        <text>L-glutamate 5-semialdehyde + phosphate + NADP(+) = L-glutamyl 5-phosphate + NADPH + H(+)</text>
        <dbReference type="Rhea" id="RHEA:19541"/>
        <dbReference type="ChEBI" id="CHEBI:15378"/>
        <dbReference type="ChEBI" id="CHEBI:43474"/>
        <dbReference type="ChEBI" id="CHEBI:57783"/>
        <dbReference type="ChEBI" id="CHEBI:58066"/>
        <dbReference type="ChEBI" id="CHEBI:58274"/>
        <dbReference type="ChEBI" id="CHEBI:58349"/>
        <dbReference type="EC" id="1.2.1.41"/>
    </reaction>
</comment>
<comment type="pathway">
    <text evidence="1">Amino-acid biosynthesis; L-proline biosynthesis; L-glutamate 5-semialdehyde from L-glutamate: step 2/2.</text>
</comment>
<comment type="subcellular location">
    <subcellularLocation>
        <location evidence="1">Cytoplasm</location>
    </subcellularLocation>
</comment>
<comment type="similarity">
    <text evidence="1">Belongs to the gamma-glutamyl phosphate reductase family.</text>
</comment>
<name>PROA_METBF</name>
<reference key="1">
    <citation type="journal article" date="2006" name="J. Bacteriol.">
        <title>The Methanosarcina barkeri genome: comparative analysis with Methanosarcina acetivorans and Methanosarcina mazei reveals extensive rearrangement within methanosarcinal genomes.</title>
        <authorList>
            <person name="Maeder D.L."/>
            <person name="Anderson I."/>
            <person name="Brettin T.S."/>
            <person name="Bruce D.C."/>
            <person name="Gilna P."/>
            <person name="Han C.S."/>
            <person name="Lapidus A."/>
            <person name="Metcalf W.W."/>
            <person name="Saunders E."/>
            <person name="Tapia R."/>
            <person name="Sowers K.R."/>
        </authorList>
    </citation>
    <scope>NUCLEOTIDE SEQUENCE [LARGE SCALE GENOMIC DNA]</scope>
    <source>
        <strain>Fusaro / DSM 804</strain>
    </source>
</reference>
<evidence type="ECO:0000255" key="1">
    <source>
        <dbReference type="HAMAP-Rule" id="MF_00412"/>
    </source>
</evidence>
<feature type="chain" id="PRO_0000230034" description="Gamma-glutamyl phosphate reductase">
    <location>
        <begin position="1"/>
        <end position="447"/>
    </location>
</feature>
<protein>
    <recommendedName>
        <fullName evidence="1">Gamma-glutamyl phosphate reductase</fullName>
        <shortName evidence="1">GPR</shortName>
        <ecNumber evidence="1">1.2.1.41</ecNumber>
    </recommendedName>
    <alternativeName>
        <fullName evidence="1">Glutamate-5-semialdehyde dehydrogenase</fullName>
    </alternativeName>
    <alternativeName>
        <fullName evidence="1">Glutamyl-gamma-semialdehyde dehydrogenase</fullName>
        <shortName evidence="1">GSA dehydrogenase</shortName>
    </alternativeName>
</protein>
<accession>Q46F78</accession>